<proteinExistence type="inferred from homology"/>
<sequence>MIIGIPKEIKNNENRVSLSPSGVHALVEQGHTVIVEKSAGLGSYFEDVDYTEAGASIVNEQAEVWNVDMVMKVKEPLEEEFQYFKEGLILFTYLHLANEEKLTRALLENKVVGIAYETVQLPDRTLPLLTPMSEVAGRMSAQIGAEFLQKYKGGMGILLGGVPGVSKGRVSIIGGGQAGTNAAKIALGLGADVTILDVNPKRLQELEDLFDGRVHTIMSNPLNIEQCVKDSDLVIGAVLIPGAKAPNLVTEDMVKEMRDGAVIVDIAIDQGGIFETTDRISTHDDPTYKKHGVVHYAVANMPGAVPRTSTIALNNATLPYAQQLASKGYLKALQDNHALSLGLNTINGELTNKGVAEALNLSYTDIESALK</sequence>
<feature type="chain" id="PRO_0000287325" description="Alanine dehydrogenase">
    <location>
        <begin position="1"/>
        <end position="371"/>
    </location>
</feature>
<feature type="active site" description="Proton donor/acceptor" evidence="2">
    <location>
        <position position="95"/>
    </location>
</feature>
<feature type="active site" description="Proton donor/acceptor" evidence="1">
    <location>
        <position position="269"/>
    </location>
</feature>
<feature type="binding site" evidence="1">
    <location>
        <position position="15"/>
    </location>
    <ligand>
        <name>substrate</name>
    </ligand>
</feature>
<feature type="binding site" evidence="1">
    <location>
        <position position="74"/>
    </location>
    <ligand>
        <name>substrate</name>
    </ligand>
</feature>
<feature type="binding site" evidence="1">
    <location>
        <position position="133"/>
    </location>
    <ligand>
        <name>NAD(+)</name>
        <dbReference type="ChEBI" id="CHEBI:57540"/>
    </ligand>
</feature>
<feature type="binding site" evidence="1">
    <location>
        <begin position="177"/>
        <end position="178"/>
    </location>
    <ligand>
        <name>NAD(+)</name>
        <dbReference type="ChEBI" id="CHEBI:57540"/>
    </ligand>
</feature>
<feature type="binding site" evidence="1">
    <location>
        <position position="197"/>
    </location>
    <ligand>
        <name>NAD(+)</name>
        <dbReference type="ChEBI" id="CHEBI:57540"/>
    </ligand>
</feature>
<feature type="binding site" evidence="1">
    <location>
        <position position="219"/>
    </location>
    <ligand>
        <name>NAD(+)</name>
        <dbReference type="ChEBI" id="CHEBI:57540"/>
    </ligand>
</feature>
<feature type="binding site" evidence="1">
    <location>
        <begin position="238"/>
        <end position="239"/>
    </location>
    <ligand>
        <name>NAD(+)</name>
        <dbReference type="ChEBI" id="CHEBI:57540"/>
    </ligand>
</feature>
<feature type="binding site" evidence="1">
    <location>
        <begin position="266"/>
        <end position="269"/>
    </location>
    <ligand>
        <name>NAD(+)</name>
        <dbReference type="ChEBI" id="CHEBI:57540"/>
    </ligand>
</feature>
<feature type="binding site" evidence="1">
    <location>
        <position position="279"/>
    </location>
    <ligand>
        <name>NAD(+)</name>
        <dbReference type="ChEBI" id="CHEBI:57540"/>
    </ligand>
</feature>
<feature type="binding site" evidence="1">
    <location>
        <begin position="298"/>
        <end position="301"/>
    </location>
    <ligand>
        <name>NAD(+)</name>
        <dbReference type="ChEBI" id="CHEBI:57540"/>
    </ligand>
</feature>
<comment type="function">
    <text evidence="1">Catalyzes the reversible reductive amination of pyruvate to L-alanine. May play a role in cell wall synthesis as L-alanine is an important constituent of the peptidoglycan layer (By similarity).</text>
</comment>
<comment type="catalytic activity">
    <reaction>
        <text>L-alanine + NAD(+) + H2O = pyruvate + NH4(+) + NADH + H(+)</text>
        <dbReference type="Rhea" id="RHEA:18405"/>
        <dbReference type="ChEBI" id="CHEBI:15361"/>
        <dbReference type="ChEBI" id="CHEBI:15377"/>
        <dbReference type="ChEBI" id="CHEBI:15378"/>
        <dbReference type="ChEBI" id="CHEBI:28938"/>
        <dbReference type="ChEBI" id="CHEBI:57540"/>
        <dbReference type="ChEBI" id="CHEBI:57945"/>
        <dbReference type="ChEBI" id="CHEBI:57972"/>
        <dbReference type="EC" id="1.4.1.1"/>
    </reaction>
</comment>
<comment type="pathway">
    <text>Amino-acid degradation; L-alanine degradation via dehydrogenase pathway; NH(3) and pyruvate from L-alanine: step 1/1.</text>
</comment>
<comment type="subunit">
    <text evidence="1">Homohexamer. Trimer of dimer (By similarity).</text>
</comment>
<comment type="similarity">
    <text evidence="3">Belongs to the AlaDH/PNT family.</text>
</comment>
<evidence type="ECO:0000250" key="1"/>
<evidence type="ECO:0000255" key="2"/>
<evidence type="ECO:0000305" key="3"/>
<reference key="1">
    <citation type="journal article" date="2005" name="Proc. Natl. Acad. Sci. U.S.A.">
        <title>Whole genome sequence of Staphylococcus saprophyticus reveals the pathogenesis of uncomplicated urinary tract infection.</title>
        <authorList>
            <person name="Kuroda M."/>
            <person name="Yamashita A."/>
            <person name="Hirakawa H."/>
            <person name="Kumano M."/>
            <person name="Morikawa K."/>
            <person name="Higashide M."/>
            <person name="Maruyama A."/>
            <person name="Inose Y."/>
            <person name="Matoba K."/>
            <person name="Toh H."/>
            <person name="Kuhara S."/>
            <person name="Hattori M."/>
            <person name="Ohta T."/>
        </authorList>
    </citation>
    <scope>NUCLEOTIDE SEQUENCE [LARGE SCALE GENOMIC DNA]</scope>
    <source>
        <strain>ATCC 15305 / DSM 20229 / NCIMB 8711 / NCTC 7292 / S-41</strain>
    </source>
</reference>
<accession>Q49YD9</accession>
<keyword id="KW-0520">NAD</keyword>
<keyword id="KW-0547">Nucleotide-binding</keyword>
<keyword id="KW-0560">Oxidoreductase</keyword>
<keyword id="KW-1185">Reference proteome</keyword>
<name>DHA_STAS1</name>
<gene>
    <name type="primary">ald</name>
    <name type="ordered locus">SSP1057</name>
</gene>
<dbReference type="EC" id="1.4.1.1"/>
<dbReference type="EMBL" id="AP008934">
    <property type="protein sequence ID" value="BAE18202.1"/>
    <property type="molecule type" value="Genomic_DNA"/>
</dbReference>
<dbReference type="RefSeq" id="WP_011302900.1">
    <property type="nucleotide sequence ID" value="NZ_MTGA01000033.1"/>
</dbReference>
<dbReference type="SMR" id="Q49YD9"/>
<dbReference type="GeneID" id="3615425"/>
<dbReference type="KEGG" id="ssp:SSP1057"/>
<dbReference type="PATRIC" id="fig|342451.11.peg.1056"/>
<dbReference type="eggNOG" id="COG0686">
    <property type="taxonomic scope" value="Bacteria"/>
</dbReference>
<dbReference type="HOGENOM" id="CLU_003376_3_0_9"/>
<dbReference type="OrthoDB" id="9804592at2"/>
<dbReference type="UniPathway" id="UPA00527">
    <property type="reaction ID" value="UER00585"/>
</dbReference>
<dbReference type="Proteomes" id="UP000006371">
    <property type="component" value="Chromosome"/>
</dbReference>
<dbReference type="GO" id="GO:0005829">
    <property type="term" value="C:cytosol"/>
    <property type="evidence" value="ECO:0000250"/>
    <property type="project" value="UniProtKB"/>
</dbReference>
<dbReference type="GO" id="GO:0005886">
    <property type="term" value="C:plasma membrane"/>
    <property type="evidence" value="ECO:0007669"/>
    <property type="project" value="TreeGrafter"/>
</dbReference>
<dbReference type="GO" id="GO:0000286">
    <property type="term" value="F:alanine dehydrogenase activity"/>
    <property type="evidence" value="ECO:0000250"/>
    <property type="project" value="UniProtKB"/>
</dbReference>
<dbReference type="GO" id="GO:0000166">
    <property type="term" value="F:nucleotide binding"/>
    <property type="evidence" value="ECO:0007669"/>
    <property type="project" value="UniProtKB-KW"/>
</dbReference>
<dbReference type="GO" id="GO:0006524">
    <property type="term" value="P:alanine catabolic process"/>
    <property type="evidence" value="ECO:0000250"/>
    <property type="project" value="UniProtKB"/>
</dbReference>
<dbReference type="GO" id="GO:0042853">
    <property type="term" value="P:L-alanine catabolic process"/>
    <property type="evidence" value="ECO:0007669"/>
    <property type="project" value="UniProtKB-UniPathway"/>
</dbReference>
<dbReference type="CDD" id="cd05305">
    <property type="entry name" value="L-AlaDH"/>
    <property type="match status" value="1"/>
</dbReference>
<dbReference type="FunFam" id="3.40.50.720:FF:000049">
    <property type="entry name" value="Alanine dehydrogenase"/>
    <property type="match status" value="1"/>
</dbReference>
<dbReference type="Gene3D" id="3.40.50.720">
    <property type="entry name" value="NAD(P)-binding Rossmann-like Domain"/>
    <property type="match status" value="2"/>
</dbReference>
<dbReference type="InterPro" id="IPR008141">
    <property type="entry name" value="Ala_DH"/>
</dbReference>
<dbReference type="InterPro" id="IPR008143">
    <property type="entry name" value="Ala_DH/PNT_CS2"/>
</dbReference>
<dbReference type="InterPro" id="IPR007886">
    <property type="entry name" value="AlaDH/PNT_N"/>
</dbReference>
<dbReference type="InterPro" id="IPR007698">
    <property type="entry name" value="AlaDH/PNT_NAD(H)-bd"/>
</dbReference>
<dbReference type="InterPro" id="IPR036291">
    <property type="entry name" value="NAD(P)-bd_dom_sf"/>
</dbReference>
<dbReference type="NCBIfam" id="TIGR00518">
    <property type="entry name" value="alaDH"/>
    <property type="match status" value="1"/>
</dbReference>
<dbReference type="PANTHER" id="PTHR42795">
    <property type="entry name" value="ALANINE DEHYDROGENASE"/>
    <property type="match status" value="1"/>
</dbReference>
<dbReference type="PANTHER" id="PTHR42795:SF1">
    <property type="entry name" value="ALANINE DEHYDROGENASE"/>
    <property type="match status" value="1"/>
</dbReference>
<dbReference type="Pfam" id="PF01262">
    <property type="entry name" value="AlaDh_PNT_C"/>
    <property type="match status" value="1"/>
</dbReference>
<dbReference type="Pfam" id="PF05222">
    <property type="entry name" value="AlaDh_PNT_N"/>
    <property type="match status" value="1"/>
</dbReference>
<dbReference type="PIRSF" id="PIRSF000183">
    <property type="entry name" value="Alanine_dh"/>
    <property type="match status" value="1"/>
</dbReference>
<dbReference type="SMART" id="SM01002">
    <property type="entry name" value="AlaDh_PNT_C"/>
    <property type="match status" value="1"/>
</dbReference>
<dbReference type="SMART" id="SM01003">
    <property type="entry name" value="AlaDh_PNT_N"/>
    <property type="match status" value="1"/>
</dbReference>
<dbReference type="SUPFAM" id="SSF52283">
    <property type="entry name" value="Formate/glycerate dehydrogenase catalytic domain-like"/>
    <property type="match status" value="1"/>
</dbReference>
<dbReference type="SUPFAM" id="SSF51735">
    <property type="entry name" value="NAD(P)-binding Rossmann-fold domains"/>
    <property type="match status" value="1"/>
</dbReference>
<dbReference type="PROSITE" id="PS00837">
    <property type="entry name" value="ALADH_PNT_2"/>
    <property type="match status" value="1"/>
</dbReference>
<organism>
    <name type="scientific">Staphylococcus saprophyticus subsp. saprophyticus (strain ATCC 15305 / DSM 20229 / NCIMB 8711 / NCTC 7292 / S-41)</name>
    <dbReference type="NCBI Taxonomy" id="342451"/>
    <lineage>
        <taxon>Bacteria</taxon>
        <taxon>Bacillati</taxon>
        <taxon>Bacillota</taxon>
        <taxon>Bacilli</taxon>
        <taxon>Bacillales</taxon>
        <taxon>Staphylococcaceae</taxon>
        <taxon>Staphylococcus</taxon>
    </lineage>
</organism>
<protein>
    <recommendedName>
        <fullName>Alanine dehydrogenase</fullName>
        <ecNumber>1.4.1.1</ecNumber>
    </recommendedName>
</protein>